<sequence>MARYLGPKLKLSRREGTDLFLKSGVRAIDTKCKIEQAPGQHGARKPRLSDYGVQLREKQKVRRIYGVLERQFRNYYKEAARLKGNTGENLLALLEGRLDNVVYRMGFGATRAEARQLVSHKAIMVNGRVVNIASYQVSPNDVVSIREKAKKQSRVKAALELAEQREKPTWLEVDAGKMEGTFKRKPERSDLSADINEHLIVELYSK</sequence>
<feature type="chain" id="PRO_1000165403" description="Small ribosomal subunit protein uS4">
    <location>
        <begin position="1"/>
        <end position="206"/>
    </location>
</feature>
<feature type="domain" description="S4 RNA-binding" evidence="1">
    <location>
        <begin position="96"/>
        <end position="156"/>
    </location>
</feature>
<accession>B7N181</accession>
<evidence type="ECO:0000255" key="1">
    <source>
        <dbReference type="HAMAP-Rule" id="MF_01306"/>
    </source>
</evidence>
<evidence type="ECO:0000305" key="2"/>
<organism>
    <name type="scientific">Escherichia coli O81 (strain ED1a)</name>
    <dbReference type="NCBI Taxonomy" id="585397"/>
    <lineage>
        <taxon>Bacteria</taxon>
        <taxon>Pseudomonadati</taxon>
        <taxon>Pseudomonadota</taxon>
        <taxon>Gammaproteobacteria</taxon>
        <taxon>Enterobacterales</taxon>
        <taxon>Enterobacteriaceae</taxon>
        <taxon>Escherichia</taxon>
    </lineage>
</organism>
<dbReference type="EMBL" id="CU928162">
    <property type="protein sequence ID" value="CAR10099.2"/>
    <property type="molecule type" value="Genomic_DNA"/>
</dbReference>
<dbReference type="RefSeq" id="WP_000135224.1">
    <property type="nucleotide sequence ID" value="NC_011745.1"/>
</dbReference>
<dbReference type="SMR" id="B7N181"/>
<dbReference type="GeneID" id="93778691"/>
<dbReference type="KEGG" id="ecq:ECED1_3960"/>
<dbReference type="HOGENOM" id="CLU_092403_0_2_6"/>
<dbReference type="Proteomes" id="UP000000748">
    <property type="component" value="Chromosome"/>
</dbReference>
<dbReference type="GO" id="GO:0015935">
    <property type="term" value="C:small ribosomal subunit"/>
    <property type="evidence" value="ECO:0007669"/>
    <property type="project" value="InterPro"/>
</dbReference>
<dbReference type="GO" id="GO:0019843">
    <property type="term" value="F:rRNA binding"/>
    <property type="evidence" value="ECO:0007669"/>
    <property type="project" value="UniProtKB-UniRule"/>
</dbReference>
<dbReference type="GO" id="GO:0003735">
    <property type="term" value="F:structural constituent of ribosome"/>
    <property type="evidence" value="ECO:0007669"/>
    <property type="project" value="InterPro"/>
</dbReference>
<dbReference type="GO" id="GO:0042274">
    <property type="term" value="P:ribosomal small subunit biogenesis"/>
    <property type="evidence" value="ECO:0007669"/>
    <property type="project" value="TreeGrafter"/>
</dbReference>
<dbReference type="GO" id="GO:0006412">
    <property type="term" value="P:translation"/>
    <property type="evidence" value="ECO:0007669"/>
    <property type="project" value="UniProtKB-UniRule"/>
</dbReference>
<dbReference type="CDD" id="cd00165">
    <property type="entry name" value="S4"/>
    <property type="match status" value="1"/>
</dbReference>
<dbReference type="FunFam" id="1.10.1050.10:FF:000001">
    <property type="entry name" value="30S ribosomal protein S4"/>
    <property type="match status" value="1"/>
</dbReference>
<dbReference type="FunFam" id="3.10.290.10:FF:000001">
    <property type="entry name" value="30S ribosomal protein S4"/>
    <property type="match status" value="1"/>
</dbReference>
<dbReference type="Gene3D" id="1.10.1050.10">
    <property type="entry name" value="Ribosomal Protein S4 Delta 41, Chain A, domain 1"/>
    <property type="match status" value="1"/>
</dbReference>
<dbReference type="Gene3D" id="3.10.290.10">
    <property type="entry name" value="RNA-binding S4 domain"/>
    <property type="match status" value="1"/>
</dbReference>
<dbReference type="HAMAP" id="MF_01306_B">
    <property type="entry name" value="Ribosomal_uS4_B"/>
    <property type="match status" value="1"/>
</dbReference>
<dbReference type="InterPro" id="IPR022801">
    <property type="entry name" value="Ribosomal_uS4"/>
</dbReference>
<dbReference type="InterPro" id="IPR005709">
    <property type="entry name" value="Ribosomal_uS4_bac-type"/>
</dbReference>
<dbReference type="InterPro" id="IPR018079">
    <property type="entry name" value="Ribosomal_uS4_CS"/>
</dbReference>
<dbReference type="InterPro" id="IPR001912">
    <property type="entry name" value="Ribosomal_uS4_N"/>
</dbReference>
<dbReference type="InterPro" id="IPR002942">
    <property type="entry name" value="S4_RNA-bd"/>
</dbReference>
<dbReference type="InterPro" id="IPR036986">
    <property type="entry name" value="S4_RNA-bd_sf"/>
</dbReference>
<dbReference type="NCBIfam" id="NF003717">
    <property type="entry name" value="PRK05327.1"/>
    <property type="match status" value="1"/>
</dbReference>
<dbReference type="NCBIfam" id="TIGR01017">
    <property type="entry name" value="rpsD_bact"/>
    <property type="match status" value="1"/>
</dbReference>
<dbReference type="PANTHER" id="PTHR11831">
    <property type="entry name" value="30S 40S RIBOSOMAL PROTEIN"/>
    <property type="match status" value="1"/>
</dbReference>
<dbReference type="PANTHER" id="PTHR11831:SF4">
    <property type="entry name" value="SMALL RIBOSOMAL SUBUNIT PROTEIN US4M"/>
    <property type="match status" value="1"/>
</dbReference>
<dbReference type="Pfam" id="PF00163">
    <property type="entry name" value="Ribosomal_S4"/>
    <property type="match status" value="1"/>
</dbReference>
<dbReference type="Pfam" id="PF01479">
    <property type="entry name" value="S4"/>
    <property type="match status" value="1"/>
</dbReference>
<dbReference type="SMART" id="SM01390">
    <property type="entry name" value="Ribosomal_S4"/>
    <property type="match status" value="1"/>
</dbReference>
<dbReference type="SMART" id="SM00363">
    <property type="entry name" value="S4"/>
    <property type="match status" value="1"/>
</dbReference>
<dbReference type="SUPFAM" id="SSF55174">
    <property type="entry name" value="Alpha-L RNA-binding motif"/>
    <property type="match status" value="1"/>
</dbReference>
<dbReference type="PROSITE" id="PS00632">
    <property type="entry name" value="RIBOSOMAL_S4"/>
    <property type="match status" value="1"/>
</dbReference>
<dbReference type="PROSITE" id="PS50889">
    <property type="entry name" value="S4"/>
    <property type="match status" value="1"/>
</dbReference>
<comment type="function">
    <text evidence="1">One of the primary rRNA binding proteins, it binds directly to 16S rRNA where it nucleates assembly of the body of the 30S subunit.</text>
</comment>
<comment type="function">
    <text evidence="1">With S5 and S12 plays an important role in translational accuracy.</text>
</comment>
<comment type="subunit">
    <text evidence="1">Part of the 30S ribosomal subunit. Contacts protein S5. The interaction surface between S4 and S5 is involved in control of translational fidelity.</text>
</comment>
<comment type="similarity">
    <text evidence="1">Belongs to the universal ribosomal protein uS4 family.</text>
</comment>
<protein>
    <recommendedName>
        <fullName evidence="1">Small ribosomal subunit protein uS4</fullName>
    </recommendedName>
    <alternativeName>
        <fullName evidence="2">30S ribosomal protein S4</fullName>
    </alternativeName>
</protein>
<keyword id="KW-0687">Ribonucleoprotein</keyword>
<keyword id="KW-0689">Ribosomal protein</keyword>
<keyword id="KW-0694">RNA-binding</keyword>
<keyword id="KW-0699">rRNA-binding</keyword>
<gene>
    <name evidence="1" type="primary">rpsD</name>
    <name type="ordered locus">ECED1_3960</name>
</gene>
<name>RS4_ECO81</name>
<proteinExistence type="inferred from homology"/>
<reference key="1">
    <citation type="journal article" date="2009" name="PLoS Genet.">
        <title>Organised genome dynamics in the Escherichia coli species results in highly diverse adaptive paths.</title>
        <authorList>
            <person name="Touchon M."/>
            <person name="Hoede C."/>
            <person name="Tenaillon O."/>
            <person name="Barbe V."/>
            <person name="Baeriswyl S."/>
            <person name="Bidet P."/>
            <person name="Bingen E."/>
            <person name="Bonacorsi S."/>
            <person name="Bouchier C."/>
            <person name="Bouvet O."/>
            <person name="Calteau A."/>
            <person name="Chiapello H."/>
            <person name="Clermont O."/>
            <person name="Cruveiller S."/>
            <person name="Danchin A."/>
            <person name="Diard M."/>
            <person name="Dossat C."/>
            <person name="Karoui M.E."/>
            <person name="Frapy E."/>
            <person name="Garry L."/>
            <person name="Ghigo J.M."/>
            <person name="Gilles A.M."/>
            <person name="Johnson J."/>
            <person name="Le Bouguenec C."/>
            <person name="Lescat M."/>
            <person name="Mangenot S."/>
            <person name="Martinez-Jehanne V."/>
            <person name="Matic I."/>
            <person name="Nassif X."/>
            <person name="Oztas S."/>
            <person name="Petit M.A."/>
            <person name="Pichon C."/>
            <person name="Rouy Z."/>
            <person name="Ruf C.S."/>
            <person name="Schneider D."/>
            <person name="Tourret J."/>
            <person name="Vacherie B."/>
            <person name="Vallenet D."/>
            <person name="Medigue C."/>
            <person name="Rocha E.P.C."/>
            <person name="Denamur E."/>
        </authorList>
    </citation>
    <scope>NUCLEOTIDE SEQUENCE [LARGE SCALE GENOMIC DNA]</scope>
    <source>
        <strain>ED1a</strain>
    </source>
</reference>